<gene>
    <name type="primary">LMBR1L</name>
    <name type="synonym">KIAA1174</name>
    <name type="synonym">LIMR</name>
    <name type="ORF">UNQ458/PRO783</name>
</gene>
<organism>
    <name type="scientific">Homo sapiens</name>
    <name type="common">Human</name>
    <dbReference type="NCBI Taxonomy" id="9606"/>
    <lineage>
        <taxon>Eukaryota</taxon>
        <taxon>Metazoa</taxon>
        <taxon>Chordata</taxon>
        <taxon>Craniata</taxon>
        <taxon>Vertebrata</taxon>
        <taxon>Euteleostomi</taxon>
        <taxon>Mammalia</taxon>
        <taxon>Eutheria</taxon>
        <taxon>Euarchontoglires</taxon>
        <taxon>Primates</taxon>
        <taxon>Haplorrhini</taxon>
        <taxon>Catarrhini</taxon>
        <taxon>Hominidae</taxon>
        <taxon>Homo</taxon>
    </lineage>
</organism>
<comment type="function">
    <text evidence="1 3 4 7">Plays an essential role in lymphocyte development by negatively regulating the canonical Wnt signaling pathway (By similarity). In association with UBAC2 and E3 ubiquitin-protein ligase AMFR, promotes the ubiquitin-mediated degradation of CTNNB1 and Wnt receptors FZD6 and LRP6 (By similarity). LMBR1L stabilizes the beta-catenin destruction complex that is required for regulating CTNNB1 levels (By similarity). Acts as a LCN1 receptor and can mediate its endocytosis (PubMed:11287427, PubMed:12591932, PubMed:23964685).</text>
</comment>
<comment type="subunit">
    <text evidence="1 3 4 5 6 7 15">Dimer (PubMed:23964685). Can also form higher oligomers (PubMed:23964685). Interacts with LCN1; this interaction mediates the endocytosis of LCN1 (PubMed:11287427, PubMed:12591932, PubMed:23964685). Interacts with UBAC2, FAF2, VCP, AMFR, ZNRF3, CTNNB1, LRP6, GSK3A and GSK3B (PubMed:31073040). Interacts with DVL2 and RNF43 (By similarity). Interaction with SCGB1A1 has been observed in PubMed:16423471, but not in PubMed:23964685 (PubMed:16423471, PubMed:23964685). Interaction with LGB which mediates the endocytosis of LGB has been observed in PubMed:17991420, but not in PubMed:23964685 (PubMed:17991420, PubMed:23964685).</text>
</comment>
<comment type="subcellular location">
    <subcellularLocation>
        <location evidence="3 6 8">Cell membrane</location>
        <topology evidence="3">Multi-pass membrane protein</topology>
    </subcellularLocation>
    <subcellularLocation>
        <location evidence="8">Endoplasmic reticulum membrane</location>
        <topology evidence="2">Multi-pass membrane protein</topology>
    </subcellularLocation>
</comment>
<comment type="alternative products">
    <event type="alternative splicing"/>
    <isoform>
        <id>Q6UX01-1</id>
        <name>1</name>
        <sequence type="displayed"/>
    </isoform>
    <isoform>
        <id>Q6UX01-2</id>
        <name>2</name>
        <sequence type="described" ref="VSP_016893"/>
    </isoform>
    <isoform>
        <id>Q6UX01-3</id>
        <name>3</name>
        <sequence type="described" ref="VSP_016894"/>
    </isoform>
    <isoform>
        <id>Q6UX01-4</id>
        <name>4</name>
        <sequence type="described" ref="VSP_016892"/>
    </isoform>
    <isoform>
        <id>Q6UX01-5</id>
        <name>5</name>
        <sequence type="described" ref="VSP_016895 VSP_016896"/>
    </isoform>
</comment>
<comment type="tissue specificity">
    <text evidence="3">Expressed in testis, pituitary gland, adrenal gland, trachea, placenta, thymus, cerebellum, stomach, mammary gland, spinal cord. A weaker expression is detected in colon, pancreas, and prostate.</text>
</comment>
<comment type="developmental stage">
    <text evidence="3">Expressed in fetal kidney and lung.</text>
</comment>
<comment type="similarity">
    <text evidence="14">Belongs to the LIMR family.</text>
</comment>
<comment type="sequence caution" evidence="14">
    <conflict type="erroneous initiation">
        <sequence resource="EMBL-CDS" id="BAA86488"/>
    </conflict>
</comment>
<keyword id="KW-0025">Alternative splicing</keyword>
<keyword id="KW-1003">Cell membrane</keyword>
<keyword id="KW-0254">Endocytosis</keyword>
<keyword id="KW-0256">Endoplasmic reticulum</keyword>
<keyword id="KW-0472">Membrane</keyword>
<keyword id="KW-1267">Proteomics identification</keyword>
<keyword id="KW-0675">Receptor</keyword>
<keyword id="KW-1185">Reference proteome</keyword>
<keyword id="KW-0812">Transmembrane</keyword>
<keyword id="KW-1133">Transmembrane helix</keyword>
<keyword id="KW-0879">Wnt signaling pathway</keyword>
<feature type="chain" id="PRO_0000053910" description="Protein LMBR1L">
    <location>
        <begin position="1"/>
        <end position="489"/>
    </location>
</feature>
<feature type="topological domain" description="Extracellular" evidence="2">
    <location>
        <begin position="1"/>
        <end position="21"/>
    </location>
</feature>
<feature type="transmembrane region" description="Helical" evidence="2">
    <location>
        <begin position="22"/>
        <end position="42"/>
    </location>
</feature>
<feature type="topological domain" description="Cytoplasmic" evidence="2">
    <location>
        <begin position="43"/>
        <end position="66"/>
    </location>
</feature>
<feature type="transmembrane region" description="Helical" evidence="2">
    <location>
        <begin position="67"/>
        <end position="87"/>
    </location>
</feature>
<feature type="topological domain" description="Extracellular" evidence="2">
    <location>
        <begin position="88"/>
        <end position="114"/>
    </location>
</feature>
<feature type="transmembrane region" description="Helical" evidence="2">
    <location>
        <begin position="115"/>
        <end position="135"/>
    </location>
</feature>
<feature type="topological domain" description="Cytoplasmic" evidence="2">
    <location>
        <begin position="136"/>
        <end position="154"/>
    </location>
</feature>
<feature type="transmembrane region" description="Helical" evidence="2">
    <location>
        <begin position="155"/>
        <end position="175"/>
    </location>
</feature>
<feature type="topological domain" description="Extracellular" evidence="2">
    <location>
        <begin position="176"/>
        <end position="196"/>
    </location>
</feature>
<feature type="transmembrane region" description="Helical" evidence="2">
    <location>
        <begin position="197"/>
        <end position="217"/>
    </location>
</feature>
<feature type="topological domain" description="Cytoplasmic" evidence="2">
    <location>
        <begin position="218"/>
        <end position="305"/>
    </location>
</feature>
<feature type="transmembrane region" description="Helical" evidence="2">
    <location>
        <begin position="306"/>
        <end position="326"/>
    </location>
</feature>
<feature type="topological domain" description="Extracellular" evidence="2">
    <location>
        <begin position="327"/>
        <end position="350"/>
    </location>
</feature>
<feature type="transmembrane region" description="Helical" evidence="2">
    <location>
        <begin position="351"/>
        <end position="371"/>
    </location>
</feature>
<feature type="topological domain" description="Cytoplasmic" evidence="2">
    <location>
        <begin position="372"/>
        <end position="388"/>
    </location>
</feature>
<feature type="transmembrane region" description="Helical" evidence="2">
    <location>
        <begin position="389"/>
        <end position="409"/>
    </location>
</feature>
<feature type="topological domain" description="Extracellular" evidence="2">
    <location>
        <begin position="410"/>
        <end position="431"/>
    </location>
</feature>
<feature type="transmembrane region" description="Helical" evidence="2">
    <location>
        <begin position="432"/>
        <end position="452"/>
    </location>
</feature>
<feature type="topological domain" description="Cytoplasmic" evidence="2">
    <location>
        <begin position="453"/>
        <end position="489"/>
    </location>
</feature>
<feature type="region of interest" description="LCN1-binding" evidence="3">
    <location>
        <begin position="1"/>
        <end position="76"/>
    </location>
</feature>
<feature type="region of interest" description="Interaction with LGB" evidence="6">
    <location>
        <begin position="1"/>
        <end position="59"/>
    </location>
</feature>
<feature type="splice variant" id="VSP_016892" description="In isoform 4." evidence="11">
    <original>MEAPDYEVLSVREQLFHERIRECIISTLLFATLYILCHIFLTRFKKPAEFTT</original>
    <variation>MVNVKALCEPEVSNCWMNVITGTGSVSSPLLVLPQPGPETSLMTGEP</variation>
    <location>
        <begin position="1"/>
        <end position="52"/>
    </location>
</feature>
<feature type="splice variant" id="VSP_016893" description="In isoform 2." evidence="10">
    <location>
        <begin position="53"/>
        <end position="54"/>
    </location>
</feature>
<feature type="splice variant" id="VSP_016894" description="In isoform 3." evidence="11 12">
    <location>
        <begin position="336"/>
        <end position="355"/>
    </location>
</feature>
<feature type="splice variant" id="VSP_016895" description="In isoform 5." evidence="9">
    <original>LMVSSVVGFYSSPLFRSLRPRWHDTAMTQII</original>
    <variation>PSGNPSLPLFSKPVSWDSRPSTSWTLSPLGL</variation>
    <location>
        <begin position="363"/>
        <end position="393"/>
    </location>
</feature>
<feature type="splice variant" id="VSP_016896" description="In isoform 5." evidence="9">
    <location>
        <begin position="394"/>
        <end position="489"/>
    </location>
</feature>
<feature type="sequence conflict" description="In Ref. 4; BAA91811." evidence="14" ref="4">
    <original>V</original>
    <variation>A</variation>
    <location>
        <position position="11"/>
    </location>
</feature>
<feature type="sequence conflict" description="In Ref. 3; AAQ88935." evidence="14" ref="3">
    <original>S</original>
    <variation>P</variation>
    <location>
        <position position="120"/>
    </location>
</feature>
<feature type="sequence conflict" description="In Ref. 4; BAA91646." evidence="14" ref="4">
    <original>M</original>
    <variation>T</variation>
    <location>
        <position position="157"/>
    </location>
</feature>
<feature type="sequence conflict" description="In Ref. 5; AAH08337." evidence="14" ref="5">
    <original>V</original>
    <variation>L</variation>
    <location>
        <position position="211"/>
    </location>
</feature>
<feature type="sequence conflict" description="In Ref. 4; BAA91646." evidence="14" ref="4">
    <original>G</original>
    <variation>V</variation>
    <location>
        <position position="334"/>
    </location>
</feature>
<feature type="sequence conflict" description="In Ref. 2; BAA86488." evidence="14" ref="2">
    <original>F</original>
    <variation>L</variation>
    <location>
        <position position="361"/>
    </location>
</feature>
<sequence>MEAPDYEVLSVREQLFHERIRECIISTLLFATLYILCHIFLTRFKKPAEFTTVDDEDATVNKIALELCTFTLAIALGAVLLLPFSIISNEVLLSLPRNYYIQWLNGSLIHGLWNLVFLFSNLSLIFLMPFAYFFTESEGFAGSRKGVLGRVYETVVMLMLLTLLVLGMVWVASAIVDKNKANRESLYDFWEYYLPYLYSCISFLGVLLLLVCTPLGLARMFSVTGKLLVKPRLLEDLEEQLYCSAFEEAALTRRICNPTSCWLPLDMELLHRQVLALQTQRVLLEKRRKASAWQRNLGYPLAMLCLLVLTGLSVLIVAIHILELLIDEAAMPRGMQGTSLGQVSFSKLGSFGAVIQVVLIFYLMVSSVVGFYSSPLFRSLRPRWHDTAMTQIIGNCVCLLVLSSALPVFSRTLGLTRFDLLGDFGRFNWLGNFYIVFLYNAAFAGLTTLCLVKTFTAAVRAELIRAFGLDRLPLPVSGFPQASRKTQHQ</sequence>
<name>LMBRL_HUMAN</name>
<proteinExistence type="evidence at protein level"/>
<reference key="1">
    <citation type="journal article" date="2001" name="J. Biol. Chem.">
        <title>Molecular cloning of a novel lipocalin-1 interacting human cell membrane receptor using phage display.</title>
        <authorList>
            <person name="Wojnar P."/>
            <person name="Lechner M."/>
            <person name="Merschak P."/>
            <person name="Redl B."/>
        </authorList>
    </citation>
    <scope>NUCLEOTIDE SEQUENCE [GENOMIC DNA / MRNA] (ISOFORM 2)</scope>
    <scope>FUNCTION</scope>
    <scope>TOPOLOGY</scope>
    <scope>TISSUE SPECIFICITY</scope>
    <scope>SUBCELLULAR LOCATION</scope>
    <scope>DEVELOPMENTAL STAGE</scope>
    <scope>INTERACTION WITH LCN1</scope>
    <source>
        <tissue>Pituitary</tissue>
    </source>
</reference>
<reference key="2">
    <citation type="journal article" date="1999" name="DNA Res.">
        <title>Characterization of cDNA clones selected by the GeneMark analysis from size-fractionated cDNA libraries from human brain.</title>
        <authorList>
            <person name="Hirosawa M."/>
            <person name="Nagase T."/>
            <person name="Ishikawa K."/>
            <person name="Kikuno R."/>
            <person name="Nomura N."/>
            <person name="Ohara O."/>
        </authorList>
    </citation>
    <scope>NUCLEOTIDE SEQUENCE [LARGE SCALE MRNA] (ISOFORM 5)</scope>
    <source>
        <tissue>Brain</tissue>
    </source>
</reference>
<reference key="3">
    <citation type="journal article" date="2003" name="Genome Res.">
        <title>The secreted protein discovery initiative (SPDI), a large-scale effort to identify novel human secreted and transmembrane proteins: a bioinformatics assessment.</title>
        <authorList>
            <person name="Clark H.F."/>
            <person name="Gurney A.L."/>
            <person name="Abaya E."/>
            <person name="Baker K."/>
            <person name="Baldwin D.T."/>
            <person name="Brush J."/>
            <person name="Chen J."/>
            <person name="Chow B."/>
            <person name="Chui C."/>
            <person name="Crowley C."/>
            <person name="Currell B."/>
            <person name="Deuel B."/>
            <person name="Dowd P."/>
            <person name="Eaton D."/>
            <person name="Foster J.S."/>
            <person name="Grimaldi C."/>
            <person name="Gu Q."/>
            <person name="Hass P.E."/>
            <person name="Heldens S."/>
            <person name="Huang A."/>
            <person name="Kim H.S."/>
            <person name="Klimowski L."/>
            <person name="Jin Y."/>
            <person name="Johnson S."/>
            <person name="Lee J."/>
            <person name="Lewis L."/>
            <person name="Liao D."/>
            <person name="Mark M.R."/>
            <person name="Robbie E."/>
            <person name="Sanchez C."/>
            <person name="Schoenfeld J."/>
            <person name="Seshagiri S."/>
            <person name="Simmons L."/>
            <person name="Singh J."/>
            <person name="Smith V."/>
            <person name="Stinson J."/>
            <person name="Vagts A."/>
            <person name="Vandlen R.L."/>
            <person name="Watanabe C."/>
            <person name="Wieand D."/>
            <person name="Woods K."/>
            <person name="Xie M.-H."/>
            <person name="Yansura D.G."/>
            <person name="Yi S."/>
            <person name="Yu G."/>
            <person name="Yuan J."/>
            <person name="Zhang M."/>
            <person name="Zhang Z."/>
            <person name="Goddard A.D."/>
            <person name="Wood W.I."/>
            <person name="Godowski P.J."/>
            <person name="Gray A.M."/>
        </authorList>
    </citation>
    <scope>NUCLEOTIDE SEQUENCE [LARGE SCALE MRNA] (ISOFORM 1)</scope>
</reference>
<reference key="4">
    <citation type="journal article" date="2004" name="Nat. Genet.">
        <title>Complete sequencing and characterization of 21,243 full-length human cDNAs.</title>
        <authorList>
            <person name="Ota T."/>
            <person name="Suzuki Y."/>
            <person name="Nishikawa T."/>
            <person name="Otsuki T."/>
            <person name="Sugiyama T."/>
            <person name="Irie R."/>
            <person name="Wakamatsu A."/>
            <person name="Hayashi K."/>
            <person name="Sato H."/>
            <person name="Nagai K."/>
            <person name="Kimura K."/>
            <person name="Makita H."/>
            <person name="Sekine M."/>
            <person name="Obayashi M."/>
            <person name="Nishi T."/>
            <person name="Shibahara T."/>
            <person name="Tanaka T."/>
            <person name="Ishii S."/>
            <person name="Yamamoto J."/>
            <person name="Saito K."/>
            <person name="Kawai Y."/>
            <person name="Isono Y."/>
            <person name="Nakamura Y."/>
            <person name="Nagahari K."/>
            <person name="Murakami K."/>
            <person name="Yasuda T."/>
            <person name="Iwayanagi T."/>
            <person name="Wagatsuma M."/>
            <person name="Shiratori A."/>
            <person name="Sudo H."/>
            <person name="Hosoiri T."/>
            <person name="Kaku Y."/>
            <person name="Kodaira H."/>
            <person name="Kondo H."/>
            <person name="Sugawara M."/>
            <person name="Takahashi M."/>
            <person name="Kanda K."/>
            <person name="Yokoi T."/>
            <person name="Furuya T."/>
            <person name="Kikkawa E."/>
            <person name="Omura Y."/>
            <person name="Abe K."/>
            <person name="Kamihara K."/>
            <person name="Katsuta N."/>
            <person name="Sato K."/>
            <person name="Tanikawa M."/>
            <person name="Yamazaki M."/>
            <person name="Ninomiya K."/>
            <person name="Ishibashi T."/>
            <person name="Yamashita H."/>
            <person name="Murakawa K."/>
            <person name="Fujimori K."/>
            <person name="Tanai H."/>
            <person name="Kimata M."/>
            <person name="Watanabe M."/>
            <person name="Hiraoka S."/>
            <person name="Chiba Y."/>
            <person name="Ishida S."/>
            <person name="Ono Y."/>
            <person name="Takiguchi S."/>
            <person name="Watanabe S."/>
            <person name="Yosida M."/>
            <person name="Hotuta T."/>
            <person name="Kusano J."/>
            <person name="Kanehori K."/>
            <person name="Takahashi-Fujii A."/>
            <person name="Hara H."/>
            <person name="Tanase T.-O."/>
            <person name="Nomura Y."/>
            <person name="Togiya S."/>
            <person name="Komai F."/>
            <person name="Hara R."/>
            <person name="Takeuchi K."/>
            <person name="Arita M."/>
            <person name="Imose N."/>
            <person name="Musashino K."/>
            <person name="Yuuki H."/>
            <person name="Oshima A."/>
            <person name="Sasaki N."/>
            <person name="Aotsuka S."/>
            <person name="Yoshikawa Y."/>
            <person name="Matsunawa H."/>
            <person name="Ichihara T."/>
            <person name="Shiohata N."/>
            <person name="Sano S."/>
            <person name="Moriya S."/>
            <person name="Momiyama H."/>
            <person name="Satoh N."/>
            <person name="Takami S."/>
            <person name="Terashima Y."/>
            <person name="Suzuki O."/>
            <person name="Nakagawa S."/>
            <person name="Senoh A."/>
            <person name="Mizoguchi H."/>
            <person name="Goto Y."/>
            <person name="Shimizu F."/>
            <person name="Wakebe H."/>
            <person name="Hishigaki H."/>
            <person name="Watanabe T."/>
            <person name="Sugiyama A."/>
            <person name="Takemoto M."/>
            <person name="Kawakami B."/>
            <person name="Yamazaki M."/>
            <person name="Watanabe K."/>
            <person name="Kumagai A."/>
            <person name="Itakura S."/>
            <person name="Fukuzumi Y."/>
            <person name="Fujimori Y."/>
            <person name="Komiyama M."/>
            <person name="Tashiro H."/>
            <person name="Tanigami A."/>
            <person name="Fujiwara T."/>
            <person name="Ono T."/>
            <person name="Yamada K."/>
            <person name="Fujii Y."/>
            <person name="Ozaki K."/>
            <person name="Hirao M."/>
            <person name="Ohmori Y."/>
            <person name="Kawabata A."/>
            <person name="Hikiji T."/>
            <person name="Kobatake N."/>
            <person name="Inagaki H."/>
            <person name="Ikema Y."/>
            <person name="Okamoto S."/>
            <person name="Okitani R."/>
            <person name="Kawakami T."/>
            <person name="Noguchi S."/>
            <person name="Itoh T."/>
            <person name="Shigeta K."/>
            <person name="Senba T."/>
            <person name="Matsumura K."/>
            <person name="Nakajima Y."/>
            <person name="Mizuno T."/>
            <person name="Morinaga M."/>
            <person name="Sasaki M."/>
            <person name="Togashi T."/>
            <person name="Oyama M."/>
            <person name="Hata H."/>
            <person name="Watanabe M."/>
            <person name="Komatsu T."/>
            <person name="Mizushima-Sugano J."/>
            <person name="Satoh T."/>
            <person name="Shirai Y."/>
            <person name="Takahashi Y."/>
            <person name="Nakagawa K."/>
            <person name="Okumura K."/>
            <person name="Nagase T."/>
            <person name="Nomura N."/>
            <person name="Kikuchi H."/>
            <person name="Masuho Y."/>
            <person name="Yamashita R."/>
            <person name="Nakai K."/>
            <person name="Yada T."/>
            <person name="Nakamura Y."/>
            <person name="Ohara O."/>
            <person name="Isogai T."/>
            <person name="Sugano S."/>
        </authorList>
    </citation>
    <scope>NUCLEOTIDE SEQUENCE [LARGE SCALE MRNA] (ISOFORMS 3 AND 4)</scope>
    <source>
        <tissue>Teratocarcinoma</tissue>
    </source>
</reference>
<reference key="5">
    <citation type="journal article" date="2004" name="Genome Res.">
        <title>The status, quality, and expansion of the NIH full-length cDNA project: the Mammalian Gene Collection (MGC).</title>
        <authorList>
            <consortium name="The MGC Project Team"/>
        </authorList>
    </citation>
    <scope>NUCLEOTIDE SEQUENCE [LARGE SCALE MRNA] (ISOFORMS 1 AND 3)</scope>
    <source>
        <tissue>Brain</tissue>
        <tissue>Kidney</tissue>
        <tissue>Uterus</tissue>
    </source>
</reference>
<reference key="6">
    <citation type="journal article" date="2007" name="BMC Genomics">
        <title>The full-ORF clone resource of the German cDNA consortium.</title>
        <authorList>
            <person name="Bechtel S."/>
            <person name="Rosenfelder H."/>
            <person name="Duda A."/>
            <person name="Schmidt C.P."/>
            <person name="Ernst U."/>
            <person name="Wellenreuther R."/>
            <person name="Mehrle A."/>
            <person name="Schuster C."/>
            <person name="Bahr A."/>
            <person name="Bloecker H."/>
            <person name="Heubner D."/>
            <person name="Hoerlein A."/>
            <person name="Michel G."/>
            <person name="Wedler H."/>
            <person name="Koehrer K."/>
            <person name="Ottenwaelder B."/>
            <person name="Poustka A."/>
            <person name="Wiemann S."/>
            <person name="Schupp I."/>
        </authorList>
    </citation>
    <scope>NUCLEOTIDE SEQUENCE [LARGE SCALE MRNA] OF 89-489 (ISOFORMS 1/2/4)</scope>
    <source>
        <tissue>Testis</tissue>
    </source>
</reference>
<reference key="7">
    <citation type="journal article" date="2003" name="J. Biol. Chem.">
        <title>Antisense down-regulation of lipocalin-interacting membrane receptor expression inhibits cellular internalization of lipocalin-1 in human NT2 cells.</title>
        <authorList>
            <person name="Wojnar P."/>
            <person name="Lechner M."/>
            <person name="Redl B."/>
        </authorList>
    </citation>
    <scope>FUNCTION</scope>
    <scope>INTERACTION WITH LCN1</scope>
</reference>
<reference key="8">
    <citation type="journal article" date="2006" name="Gene">
        <title>Interaction of uteroglobin with lipocalin-1 receptor suppresses cancer cell motility and invasion.</title>
        <authorList>
            <person name="Zhang Z."/>
            <person name="Kim S.J."/>
            <person name="Chowdhury B."/>
            <person name="Wang J."/>
            <person name="Lee Y.C."/>
            <person name="Tsai P.C."/>
            <person name="Choi M."/>
            <person name="Mukherjee A.B."/>
        </authorList>
    </citation>
    <scope>INTERACTION WITH SCGB1A1</scope>
</reference>
<reference key="9">
    <citation type="journal article" date="2008" name="Biochim. Biophys. Acta">
        <title>Lipocalin-interacting-membrane-receptor (LIMR) mediates cellular internalization of beta-lactoglobulin.</title>
        <authorList>
            <person name="Fluckinger M."/>
            <person name="Merschak P."/>
            <person name="Hermann M."/>
            <person name="Haertle T."/>
            <person name="Redl B."/>
        </authorList>
    </citation>
    <scope>INTERACTION WITH LGB</scope>
    <scope>SUBCELLULAR LOCATION</scope>
</reference>
<reference key="10">
    <citation type="journal article" date="2013" name="Mol. Membr. Biol.">
        <title>Expression, characterization and ligand specificity of lipocalin-1 interacting membrane receptor (LIMR).</title>
        <authorList>
            <person name="Hesselink R.W."/>
            <person name="Findlay J.B."/>
        </authorList>
    </citation>
    <scope>FUNCTION</scope>
    <scope>SUBUNIT</scope>
    <scope>INTERACTION WITH LCN1</scope>
    <scope>ABSENCE OF INTERACTION WITH SCGB1A1 AND LGB</scope>
    <scope>IDENTIFICATION BY MASS SPECTROMETRY</scope>
</reference>
<reference key="11">
    <citation type="journal article" date="2019" name="Science">
        <title>LMBR1L regulates lymphopoiesis through Wnt/beta-catenin signaling.</title>
        <authorList>
            <person name="Choi J.H."/>
            <person name="Zhong X."/>
            <person name="McAlpine W."/>
            <person name="Liao T.C."/>
            <person name="Zhang D."/>
            <person name="Fang B."/>
            <person name="Russell J."/>
            <person name="Ludwig S."/>
            <person name="Nair-Gill E."/>
            <person name="Zhang Z."/>
            <person name="Wang K.W."/>
            <person name="Misawa T."/>
            <person name="Zhan X."/>
            <person name="Choi M."/>
            <person name="Wang T."/>
            <person name="Li X."/>
            <person name="Tang M."/>
            <person name="Sun Q."/>
            <person name="Yu L."/>
            <person name="Murray A.R."/>
            <person name="Moresco E.M.Y."/>
            <person name="Beutler B."/>
        </authorList>
    </citation>
    <scope>INTERACTION WITH UBAC2; FAF2; VCP; AMFR; ZNRF3; CTNNB1; LRP6; GSK3A AND GSK3B</scope>
    <scope>SUBCELLULAR LOCATION</scope>
</reference>
<dbReference type="EMBL" id="AF260728">
    <property type="protein sequence ID" value="AAK60600.1"/>
    <property type="molecule type" value="mRNA"/>
</dbReference>
<dbReference type="EMBL" id="AF351620">
    <property type="protein sequence ID" value="AAK63067.1"/>
    <property type="molecule type" value="Genomic_DNA"/>
</dbReference>
<dbReference type="EMBL" id="AB033000">
    <property type="protein sequence ID" value="BAA86488.1"/>
    <property type="status" value="ALT_INIT"/>
    <property type="molecule type" value="mRNA"/>
</dbReference>
<dbReference type="EMBL" id="AY358572">
    <property type="protein sequence ID" value="AAQ88935.1"/>
    <property type="molecule type" value="mRNA"/>
</dbReference>
<dbReference type="EMBL" id="AK001356">
    <property type="protein sequence ID" value="BAA91646.1"/>
    <property type="molecule type" value="mRNA"/>
</dbReference>
<dbReference type="EMBL" id="AK001651">
    <property type="protein sequence ID" value="BAA91811.1"/>
    <property type="molecule type" value="mRNA"/>
</dbReference>
<dbReference type="EMBL" id="BC008337">
    <property type="protein sequence ID" value="AAH08337.1"/>
    <property type="molecule type" value="mRNA"/>
</dbReference>
<dbReference type="EMBL" id="BC015015">
    <property type="protein sequence ID" value="AAH15015.1"/>
    <property type="molecule type" value="mRNA"/>
</dbReference>
<dbReference type="EMBL" id="BC031550">
    <property type="protein sequence ID" value="AAH31550.1"/>
    <property type="molecule type" value="mRNA"/>
</dbReference>
<dbReference type="EMBL" id="AL137599">
    <property type="protein sequence ID" value="CAB70835.1"/>
    <property type="molecule type" value="mRNA"/>
</dbReference>
<dbReference type="CCDS" id="CCDS73466.1">
    <molecule id="Q6UX01-3"/>
</dbReference>
<dbReference type="CCDS" id="CCDS8780.2">
    <molecule id="Q6UX01-1"/>
</dbReference>
<dbReference type="PIR" id="T46306">
    <property type="entry name" value="T46306"/>
</dbReference>
<dbReference type="RefSeq" id="NP_001287679.1">
    <molecule id="Q6UX01-4"/>
    <property type="nucleotide sequence ID" value="NM_001300750.2"/>
</dbReference>
<dbReference type="RefSeq" id="NP_001287680.1">
    <molecule id="Q6UX01-3"/>
    <property type="nucleotide sequence ID" value="NM_001300751.2"/>
</dbReference>
<dbReference type="RefSeq" id="NP_060583.2">
    <molecule id="Q6UX01-1"/>
    <property type="nucleotide sequence ID" value="NM_018113.4"/>
</dbReference>
<dbReference type="RefSeq" id="XP_011536865.1">
    <property type="nucleotide sequence ID" value="XM_011538563.2"/>
</dbReference>
<dbReference type="RefSeq" id="XP_016875115.1">
    <property type="nucleotide sequence ID" value="XM_017019626.1"/>
</dbReference>
<dbReference type="RefSeq" id="XP_047285095.1">
    <molecule id="Q6UX01-4"/>
    <property type="nucleotide sequence ID" value="XM_047429139.1"/>
</dbReference>
<dbReference type="RefSeq" id="XP_054228505.1">
    <molecule id="Q6UX01-4"/>
    <property type="nucleotide sequence ID" value="XM_054372530.1"/>
</dbReference>
<dbReference type="BioGRID" id="120838">
    <property type="interactions" value="946"/>
</dbReference>
<dbReference type="FunCoup" id="Q6UX01">
    <property type="interactions" value="1280"/>
</dbReference>
<dbReference type="IntAct" id="Q6UX01">
    <property type="interactions" value="6"/>
</dbReference>
<dbReference type="MINT" id="Q6UX01"/>
<dbReference type="STRING" id="9606.ENSP00000267102"/>
<dbReference type="iPTMnet" id="Q6UX01"/>
<dbReference type="PhosphoSitePlus" id="Q6UX01"/>
<dbReference type="BioMuta" id="LMBR1L"/>
<dbReference type="DMDM" id="85681040"/>
<dbReference type="jPOST" id="Q6UX01"/>
<dbReference type="MassIVE" id="Q6UX01"/>
<dbReference type="PaxDb" id="9606-ENSP00000267102"/>
<dbReference type="PeptideAtlas" id="Q6UX01"/>
<dbReference type="Antibodypedia" id="42857">
    <property type="antibodies" value="70 antibodies from 17 providers"/>
</dbReference>
<dbReference type="DNASU" id="55716"/>
<dbReference type="Ensembl" id="ENST00000267102.13">
    <molecule id="Q6UX01-1"/>
    <property type="protein sequence ID" value="ENSP00000267102.8"/>
    <property type="gene ID" value="ENSG00000139636.16"/>
</dbReference>
<dbReference type="Ensembl" id="ENST00000547382.5">
    <molecule id="Q6UX01-3"/>
    <property type="protein sequence ID" value="ENSP00000447329.1"/>
    <property type="gene ID" value="ENSG00000139636.16"/>
</dbReference>
<dbReference type="GeneID" id="55716"/>
<dbReference type="KEGG" id="hsa:55716"/>
<dbReference type="MANE-Select" id="ENST00000267102.13">
    <property type="protein sequence ID" value="ENSP00000267102.8"/>
    <property type="RefSeq nucleotide sequence ID" value="NM_018113.4"/>
    <property type="RefSeq protein sequence ID" value="NP_060583.2"/>
</dbReference>
<dbReference type="UCSC" id="uc001rth.5">
    <molecule id="Q6UX01-1"/>
    <property type="organism name" value="human"/>
</dbReference>
<dbReference type="AGR" id="HGNC:18268"/>
<dbReference type="CTD" id="55716"/>
<dbReference type="DisGeNET" id="55716"/>
<dbReference type="GeneCards" id="LMBR1L"/>
<dbReference type="HGNC" id="HGNC:18268">
    <property type="gene designation" value="LMBR1L"/>
</dbReference>
<dbReference type="HPA" id="ENSG00000139636">
    <property type="expression patterns" value="Low tissue specificity"/>
</dbReference>
<dbReference type="MIM" id="610007">
    <property type="type" value="gene"/>
</dbReference>
<dbReference type="neXtProt" id="NX_Q6UX01"/>
<dbReference type="OpenTargets" id="ENSG00000139636"/>
<dbReference type="PharmGKB" id="PA142671545"/>
<dbReference type="VEuPathDB" id="HostDB:ENSG00000139636"/>
<dbReference type="eggNOG" id="KOG3722">
    <property type="taxonomic scope" value="Eukaryota"/>
</dbReference>
<dbReference type="GeneTree" id="ENSGT00390000007809"/>
<dbReference type="HOGENOM" id="CLU_029445_1_0_1"/>
<dbReference type="InParanoid" id="Q6UX01"/>
<dbReference type="OMA" id="QQRRTWW"/>
<dbReference type="OrthoDB" id="5596951at2759"/>
<dbReference type="PAN-GO" id="Q6UX01">
    <property type="GO annotations" value="4 GO annotations based on evolutionary models"/>
</dbReference>
<dbReference type="PhylomeDB" id="Q6UX01"/>
<dbReference type="TreeFam" id="TF313485"/>
<dbReference type="PathwayCommons" id="Q6UX01"/>
<dbReference type="SignaLink" id="Q6UX01"/>
<dbReference type="BioGRID-ORCS" id="55716">
    <property type="hits" value="13 hits in 1151 CRISPR screens"/>
</dbReference>
<dbReference type="ChiTaRS" id="LMBR1L">
    <property type="organism name" value="human"/>
</dbReference>
<dbReference type="GeneWiki" id="LMBR1L"/>
<dbReference type="GenomeRNAi" id="55716"/>
<dbReference type="Pharos" id="Q6UX01">
    <property type="development level" value="Tbio"/>
</dbReference>
<dbReference type="PRO" id="PR:Q6UX01"/>
<dbReference type="Proteomes" id="UP000005640">
    <property type="component" value="Chromosome 12"/>
</dbReference>
<dbReference type="RNAct" id="Q6UX01">
    <property type="molecule type" value="protein"/>
</dbReference>
<dbReference type="Bgee" id="ENSG00000139636">
    <property type="expression patterns" value="Expressed in right testis and 197 other cell types or tissues"/>
</dbReference>
<dbReference type="ExpressionAtlas" id="Q6UX01">
    <property type="expression patterns" value="baseline and differential"/>
</dbReference>
<dbReference type="GO" id="GO:0005789">
    <property type="term" value="C:endoplasmic reticulum membrane"/>
    <property type="evidence" value="ECO:0000314"/>
    <property type="project" value="UniProtKB"/>
</dbReference>
<dbReference type="GO" id="GO:0005886">
    <property type="term" value="C:plasma membrane"/>
    <property type="evidence" value="ECO:0000314"/>
    <property type="project" value="UniProtKB"/>
</dbReference>
<dbReference type="GO" id="GO:0004888">
    <property type="term" value="F:transmembrane signaling receptor activity"/>
    <property type="evidence" value="ECO:0000314"/>
    <property type="project" value="UniProtKB"/>
</dbReference>
<dbReference type="GO" id="GO:0060218">
    <property type="term" value="P:hematopoietic stem cell differentiation"/>
    <property type="evidence" value="ECO:0000250"/>
    <property type="project" value="UniProtKB"/>
</dbReference>
<dbReference type="GO" id="GO:0090090">
    <property type="term" value="P:negative regulation of canonical Wnt signaling pathway"/>
    <property type="evidence" value="ECO:0000250"/>
    <property type="project" value="UniProtKB"/>
</dbReference>
<dbReference type="GO" id="GO:0006898">
    <property type="term" value="P:receptor-mediated endocytosis"/>
    <property type="evidence" value="ECO:0000315"/>
    <property type="project" value="UniProtKB"/>
</dbReference>
<dbReference type="GO" id="GO:0007165">
    <property type="term" value="P:signal transduction"/>
    <property type="evidence" value="ECO:0000314"/>
    <property type="project" value="UniProtKB"/>
</dbReference>
<dbReference type="GO" id="GO:0070231">
    <property type="term" value="P:T cell apoptotic process"/>
    <property type="evidence" value="ECO:0000250"/>
    <property type="project" value="UniProtKB"/>
</dbReference>
<dbReference type="GO" id="GO:0030217">
    <property type="term" value="P:T cell differentiation"/>
    <property type="evidence" value="ECO:0000250"/>
    <property type="project" value="UniProtKB"/>
</dbReference>
<dbReference type="GO" id="GO:0042098">
    <property type="term" value="P:T cell proliferation"/>
    <property type="evidence" value="ECO:0000250"/>
    <property type="project" value="UniProtKB"/>
</dbReference>
<dbReference type="GO" id="GO:0016055">
    <property type="term" value="P:Wnt signaling pathway"/>
    <property type="evidence" value="ECO:0007669"/>
    <property type="project" value="UniProtKB-KW"/>
</dbReference>
<dbReference type="InterPro" id="IPR008075">
    <property type="entry name" value="LIMR"/>
</dbReference>
<dbReference type="InterPro" id="IPR006876">
    <property type="entry name" value="LMBR1-like_membr_prot"/>
</dbReference>
<dbReference type="PANTHER" id="PTHR12625">
    <property type="entry name" value="LIPOCALIN-1 INTERACTING MEMBRANE RECEPTOR LIMR"/>
    <property type="match status" value="1"/>
</dbReference>
<dbReference type="PANTHER" id="PTHR12625:SF2">
    <property type="entry name" value="PROTEIN LMBR1L"/>
    <property type="match status" value="1"/>
</dbReference>
<dbReference type="Pfam" id="PF04791">
    <property type="entry name" value="LMBR1"/>
    <property type="match status" value="2"/>
</dbReference>
<dbReference type="PRINTS" id="PR01692">
    <property type="entry name" value="LIPOCALINIMR"/>
</dbReference>
<evidence type="ECO:0000250" key="1">
    <source>
        <dbReference type="UniProtKB" id="Q9D1E5"/>
    </source>
</evidence>
<evidence type="ECO:0000255" key="2"/>
<evidence type="ECO:0000269" key="3">
    <source>
    </source>
</evidence>
<evidence type="ECO:0000269" key="4">
    <source>
    </source>
</evidence>
<evidence type="ECO:0000269" key="5">
    <source>
    </source>
</evidence>
<evidence type="ECO:0000269" key="6">
    <source>
    </source>
</evidence>
<evidence type="ECO:0000269" key="7">
    <source>
    </source>
</evidence>
<evidence type="ECO:0000269" key="8">
    <source>
    </source>
</evidence>
<evidence type="ECO:0000303" key="9">
    <source>
    </source>
</evidence>
<evidence type="ECO:0000303" key="10">
    <source>
    </source>
</evidence>
<evidence type="ECO:0000303" key="11">
    <source>
    </source>
</evidence>
<evidence type="ECO:0000303" key="12">
    <source>
    </source>
</evidence>
<evidence type="ECO:0000303" key="13">
    <source>
    </source>
</evidence>
<evidence type="ECO:0000305" key="14"/>
<evidence type="ECO:0000305" key="15">
    <source>
    </source>
</evidence>
<protein>
    <recommendedName>
        <fullName>Protein LMBR1L</fullName>
    </recommendedName>
    <alternativeName>
        <fullName>Limb region 1 protein homolog-like</fullName>
    </alternativeName>
    <alternativeName>
        <fullName evidence="10 13">Lipocalin-1-interacting membrane receptor</fullName>
        <shortName evidence="10 13">LIMR</shortName>
    </alternativeName>
</protein>
<accession>Q6UX01</accession>
<accession>Q969J4</accession>
<accession>Q96BY8</accession>
<accession>Q96HN8</accession>
<accession>Q9NT09</accession>
<accession>Q9NVE1</accession>
<accession>Q9NVU9</accession>
<accession>Q9ULP6</accession>